<accession>A4VJV1</accession>
<protein>
    <recommendedName>
        <fullName evidence="1">tRNA pseudouridine synthase D</fullName>
        <ecNumber evidence="1">5.4.99.27</ecNumber>
    </recommendedName>
    <alternativeName>
        <fullName evidence="1">tRNA pseudouridine(13) synthase</fullName>
    </alternativeName>
    <alternativeName>
        <fullName evidence="1">tRNA pseudouridylate synthase D</fullName>
    </alternativeName>
    <alternativeName>
        <fullName evidence="1">tRNA-uridine isomerase D</fullName>
    </alternativeName>
</protein>
<evidence type="ECO:0000255" key="1">
    <source>
        <dbReference type="HAMAP-Rule" id="MF_01082"/>
    </source>
</evidence>
<keyword id="KW-0413">Isomerase</keyword>
<keyword id="KW-1185">Reference proteome</keyword>
<keyword id="KW-0819">tRNA processing</keyword>
<comment type="function">
    <text evidence="1">Responsible for synthesis of pseudouridine from uracil-13 in transfer RNAs.</text>
</comment>
<comment type="catalytic activity">
    <reaction evidence="1">
        <text>uridine(13) in tRNA = pseudouridine(13) in tRNA</text>
        <dbReference type="Rhea" id="RHEA:42540"/>
        <dbReference type="Rhea" id="RHEA-COMP:10105"/>
        <dbReference type="Rhea" id="RHEA-COMP:10106"/>
        <dbReference type="ChEBI" id="CHEBI:65314"/>
        <dbReference type="ChEBI" id="CHEBI:65315"/>
        <dbReference type="EC" id="5.4.99.27"/>
    </reaction>
</comment>
<comment type="similarity">
    <text evidence="1">Belongs to the pseudouridine synthase TruD family.</text>
</comment>
<feature type="chain" id="PRO_1000084760" description="tRNA pseudouridine synthase D">
    <location>
        <begin position="1"/>
        <end position="346"/>
    </location>
</feature>
<feature type="domain" description="TRUD" evidence="1">
    <location>
        <begin position="157"/>
        <end position="303"/>
    </location>
</feature>
<feature type="active site" description="Nucleophile" evidence="1">
    <location>
        <position position="81"/>
    </location>
</feature>
<organism>
    <name type="scientific">Stutzerimonas stutzeri (strain A1501)</name>
    <name type="common">Pseudomonas stutzeri</name>
    <dbReference type="NCBI Taxonomy" id="379731"/>
    <lineage>
        <taxon>Bacteria</taxon>
        <taxon>Pseudomonadati</taxon>
        <taxon>Pseudomonadota</taxon>
        <taxon>Gammaproteobacteria</taxon>
        <taxon>Pseudomonadales</taxon>
        <taxon>Pseudomonadaceae</taxon>
        <taxon>Stutzerimonas</taxon>
    </lineage>
</organism>
<reference key="1">
    <citation type="journal article" date="2008" name="Proc. Natl. Acad. Sci. U.S.A.">
        <title>Nitrogen fixation island and rhizosphere competence traits in the genome of root-associated Pseudomonas stutzeri A1501.</title>
        <authorList>
            <person name="Yan Y."/>
            <person name="Yang J."/>
            <person name="Dou Y."/>
            <person name="Chen M."/>
            <person name="Ping S."/>
            <person name="Peng J."/>
            <person name="Lu W."/>
            <person name="Zhang W."/>
            <person name="Yao Z."/>
            <person name="Li H."/>
            <person name="Liu W."/>
            <person name="He S."/>
            <person name="Geng L."/>
            <person name="Zhang X."/>
            <person name="Yang F."/>
            <person name="Yu H."/>
            <person name="Zhan Y."/>
            <person name="Li D."/>
            <person name="Lin Z."/>
            <person name="Wang Y."/>
            <person name="Elmerich C."/>
            <person name="Lin M."/>
            <person name="Jin Q."/>
        </authorList>
    </citation>
    <scope>NUCLEOTIDE SEQUENCE [LARGE SCALE GENOMIC DNA]</scope>
    <source>
        <strain>A1501</strain>
    </source>
</reference>
<gene>
    <name evidence="1" type="primary">truD</name>
    <name type="ordered locus">PST_1567</name>
</gene>
<name>TRUD_STUS1</name>
<sequence>MTEDQLLGPRAHGEPCGSAVLKAVAEDFQVEEVLDIPLSGEGEHLWLWVEKRNLNTEEAAKRIARAAGVPLKLISYAGLKDRQALTRQWFSLHLPGKADPDLAAAEDDSLRLLQRVRHQRKLQRGAHSANGFRLRLTDLHADHAQLDARLERIRAQGVPNYFGLQRFGYEGGNLLGARDFAARAELPVQRNLRSRLLSAGRSYLFNRVLAQRVADGSWAEARVGDLLAFTDSRSFFPAAEAECSDPRLAILDLHPTGPLWGEGGSPAGAEIQALEDAVAASEEPIANWLAQAGMKHERRILRLPIGGLSWHYPGPDILQLEFVLPTGCFATAMVRELVSLAGQTDI</sequence>
<proteinExistence type="inferred from homology"/>
<dbReference type="EC" id="5.4.99.27" evidence="1"/>
<dbReference type="EMBL" id="CP000304">
    <property type="protein sequence ID" value="ABP79252.1"/>
    <property type="molecule type" value="Genomic_DNA"/>
</dbReference>
<dbReference type="RefSeq" id="WP_011912730.1">
    <property type="nucleotide sequence ID" value="NC_009434.1"/>
</dbReference>
<dbReference type="SMR" id="A4VJV1"/>
<dbReference type="KEGG" id="psa:PST_1567"/>
<dbReference type="eggNOG" id="COG0585">
    <property type="taxonomic scope" value="Bacteria"/>
</dbReference>
<dbReference type="HOGENOM" id="CLU_005281_4_0_6"/>
<dbReference type="Proteomes" id="UP000000233">
    <property type="component" value="Chromosome"/>
</dbReference>
<dbReference type="GO" id="GO:0005829">
    <property type="term" value="C:cytosol"/>
    <property type="evidence" value="ECO:0007669"/>
    <property type="project" value="TreeGrafter"/>
</dbReference>
<dbReference type="GO" id="GO:0003723">
    <property type="term" value="F:RNA binding"/>
    <property type="evidence" value="ECO:0007669"/>
    <property type="project" value="InterPro"/>
</dbReference>
<dbReference type="GO" id="GO:0160150">
    <property type="term" value="F:tRNA pseudouridine(13) synthase activity"/>
    <property type="evidence" value="ECO:0007669"/>
    <property type="project" value="UniProtKB-EC"/>
</dbReference>
<dbReference type="GO" id="GO:0031119">
    <property type="term" value="P:tRNA pseudouridine synthesis"/>
    <property type="evidence" value="ECO:0007669"/>
    <property type="project" value="UniProtKB-UniRule"/>
</dbReference>
<dbReference type="CDD" id="cd02575">
    <property type="entry name" value="PseudoU_synth_EcTruD"/>
    <property type="match status" value="1"/>
</dbReference>
<dbReference type="Gene3D" id="3.30.2350.20">
    <property type="entry name" value="TruD, catalytic domain"/>
    <property type="match status" value="1"/>
</dbReference>
<dbReference type="Gene3D" id="3.30.2340.10">
    <property type="entry name" value="TruD, insertion domain"/>
    <property type="match status" value="1"/>
</dbReference>
<dbReference type="HAMAP" id="MF_01082">
    <property type="entry name" value="TruD"/>
    <property type="match status" value="1"/>
</dbReference>
<dbReference type="InterPro" id="IPR020103">
    <property type="entry name" value="PsdUridine_synth_cat_dom_sf"/>
</dbReference>
<dbReference type="InterPro" id="IPR001656">
    <property type="entry name" value="PsdUridine_synth_TruD"/>
</dbReference>
<dbReference type="InterPro" id="IPR020119">
    <property type="entry name" value="PsdUridine_synth_TruD_CS"/>
</dbReference>
<dbReference type="InterPro" id="IPR011760">
    <property type="entry name" value="PsdUridine_synth_TruD_insert"/>
</dbReference>
<dbReference type="InterPro" id="IPR042214">
    <property type="entry name" value="TruD_catalytic"/>
</dbReference>
<dbReference type="InterPro" id="IPR043165">
    <property type="entry name" value="TruD_insert_sf"/>
</dbReference>
<dbReference type="InterPro" id="IPR050170">
    <property type="entry name" value="TruD_pseudoU_synthase"/>
</dbReference>
<dbReference type="NCBIfam" id="NF002153">
    <property type="entry name" value="PRK00984.1-2"/>
    <property type="match status" value="1"/>
</dbReference>
<dbReference type="PANTHER" id="PTHR47811">
    <property type="entry name" value="TRNA PSEUDOURIDINE SYNTHASE D"/>
    <property type="match status" value="1"/>
</dbReference>
<dbReference type="PANTHER" id="PTHR47811:SF1">
    <property type="entry name" value="TRNA PSEUDOURIDINE SYNTHASE D"/>
    <property type="match status" value="1"/>
</dbReference>
<dbReference type="Pfam" id="PF01142">
    <property type="entry name" value="TruD"/>
    <property type="match status" value="2"/>
</dbReference>
<dbReference type="SUPFAM" id="SSF55120">
    <property type="entry name" value="Pseudouridine synthase"/>
    <property type="match status" value="1"/>
</dbReference>
<dbReference type="PROSITE" id="PS50984">
    <property type="entry name" value="TRUD"/>
    <property type="match status" value="1"/>
</dbReference>
<dbReference type="PROSITE" id="PS01268">
    <property type="entry name" value="UPF0024"/>
    <property type="match status" value="1"/>
</dbReference>